<evidence type="ECO:0000255" key="1">
    <source>
        <dbReference type="HAMAP-Rule" id="MF_00364"/>
    </source>
</evidence>
<reference key="1">
    <citation type="journal article" date="2002" name="Nature">
        <title>Comparison of the genomes of two Xanthomonas pathogens with differing host specificities.</title>
        <authorList>
            <person name="da Silva A.C.R."/>
            <person name="Ferro J.A."/>
            <person name="Reinach F.C."/>
            <person name="Farah C.S."/>
            <person name="Furlan L.R."/>
            <person name="Quaggio R.B."/>
            <person name="Monteiro-Vitorello C.B."/>
            <person name="Van Sluys M.A."/>
            <person name="Almeida N.F. Jr."/>
            <person name="Alves L.M.C."/>
            <person name="do Amaral A.M."/>
            <person name="Bertolini M.C."/>
            <person name="Camargo L.E.A."/>
            <person name="Camarotte G."/>
            <person name="Cannavan F."/>
            <person name="Cardozo J."/>
            <person name="Chambergo F."/>
            <person name="Ciapina L.P."/>
            <person name="Cicarelli R.M.B."/>
            <person name="Coutinho L.L."/>
            <person name="Cursino-Santos J.R."/>
            <person name="El-Dorry H."/>
            <person name="Faria J.B."/>
            <person name="Ferreira A.J.S."/>
            <person name="Ferreira R.C.C."/>
            <person name="Ferro M.I.T."/>
            <person name="Formighieri E.F."/>
            <person name="Franco M.C."/>
            <person name="Greggio C.C."/>
            <person name="Gruber A."/>
            <person name="Katsuyama A.M."/>
            <person name="Kishi L.T."/>
            <person name="Leite R.P."/>
            <person name="Lemos E.G.M."/>
            <person name="Lemos M.V.F."/>
            <person name="Locali E.C."/>
            <person name="Machado M.A."/>
            <person name="Madeira A.M.B.N."/>
            <person name="Martinez-Rossi N.M."/>
            <person name="Martins E.C."/>
            <person name="Meidanis J."/>
            <person name="Menck C.F.M."/>
            <person name="Miyaki C.Y."/>
            <person name="Moon D.H."/>
            <person name="Moreira L.M."/>
            <person name="Novo M.T.M."/>
            <person name="Okura V.K."/>
            <person name="Oliveira M.C."/>
            <person name="Oliveira V.R."/>
            <person name="Pereira H.A."/>
            <person name="Rossi A."/>
            <person name="Sena J.A.D."/>
            <person name="Silva C."/>
            <person name="de Souza R.F."/>
            <person name="Spinola L.A.F."/>
            <person name="Takita M.A."/>
            <person name="Tamura R.E."/>
            <person name="Teixeira E.C."/>
            <person name="Tezza R.I.D."/>
            <person name="Trindade dos Santos M."/>
            <person name="Truffi D."/>
            <person name="Tsai S.M."/>
            <person name="White F.F."/>
            <person name="Setubal J.C."/>
            <person name="Kitajima J.P."/>
        </authorList>
    </citation>
    <scope>NUCLEOTIDE SEQUENCE [LARGE SCALE GENOMIC DNA]</scope>
    <source>
        <strain>ATCC 33913 / DSM 3586 / NCPPB 528 / LMG 568 / P 25</strain>
    </source>
</reference>
<comment type="function">
    <text evidence="1">Plays a role in peptidoglycan recycling by cleaving the terminal beta-1,4-linked N-acetylglucosamine (GlcNAc) from peptide-linked peptidoglycan fragments, giving rise to free GlcNAc, anhydro-N-acetylmuramic acid and anhydro-N-acetylmuramic acid-linked peptides.</text>
</comment>
<comment type="catalytic activity">
    <reaction evidence="1">
        <text>Hydrolysis of terminal non-reducing N-acetyl-D-hexosamine residues in N-acetyl-beta-D-hexosaminides.</text>
        <dbReference type="EC" id="3.2.1.52"/>
    </reaction>
</comment>
<comment type="pathway">
    <text evidence="1">Cell wall biogenesis; peptidoglycan recycling.</text>
</comment>
<comment type="subcellular location">
    <subcellularLocation>
        <location evidence="1">Cytoplasm</location>
    </subcellularLocation>
</comment>
<comment type="similarity">
    <text evidence="1">Belongs to the glycosyl hydrolase 3 family. NagZ subfamily.</text>
</comment>
<protein>
    <recommendedName>
        <fullName evidence="1">Beta-hexosaminidase</fullName>
        <ecNumber evidence="1">3.2.1.52</ecNumber>
    </recommendedName>
    <alternativeName>
        <fullName evidence="1">Beta-N-acetylhexosaminidase</fullName>
    </alternativeName>
    <alternativeName>
        <fullName evidence="1">N-acetyl-beta-glucosaminidase</fullName>
    </alternativeName>
</protein>
<organism>
    <name type="scientific">Xanthomonas campestris pv. campestris (strain ATCC 33913 / DSM 3586 / NCPPB 528 / LMG 568 / P 25)</name>
    <dbReference type="NCBI Taxonomy" id="190485"/>
    <lineage>
        <taxon>Bacteria</taxon>
        <taxon>Pseudomonadati</taxon>
        <taxon>Pseudomonadota</taxon>
        <taxon>Gammaproteobacteria</taxon>
        <taxon>Lysobacterales</taxon>
        <taxon>Lysobacteraceae</taxon>
        <taxon>Xanthomonas</taxon>
    </lineage>
</organism>
<gene>
    <name evidence="1" type="primary">nagZ</name>
    <name type="ordered locus">XCC1283</name>
</gene>
<proteinExistence type="inferred from homology"/>
<keyword id="KW-0131">Cell cycle</keyword>
<keyword id="KW-0132">Cell division</keyword>
<keyword id="KW-0133">Cell shape</keyword>
<keyword id="KW-0961">Cell wall biogenesis/degradation</keyword>
<keyword id="KW-0963">Cytoplasm</keyword>
<keyword id="KW-0326">Glycosidase</keyword>
<keyword id="KW-0378">Hydrolase</keyword>
<keyword id="KW-0573">Peptidoglycan synthesis</keyword>
<keyword id="KW-1185">Reference proteome</keyword>
<accession>Q8PB42</accession>
<feature type="chain" id="PRO_0000210803" description="Beta-hexosaminidase">
    <location>
        <begin position="1"/>
        <end position="331"/>
    </location>
</feature>
<feature type="active site" description="Proton donor/acceptor" evidence="1">
    <location>
        <position position="176"/>
    </location>
</feature>
<feature type="active site" description="Nucleophile" evidence="1">
    <location>
        <position position="247"/>
    </location>
</feature>
<feature type="binding site" evidence="1">
    <location>
        <position position="60"/>
    </location>
    <ligand>
        <name>substrate</name>
    </ligand>
</feature>
<feature type="binding site" evidence="1">
    <location>
        <position position="68"/>
    </location>
    <ligand>
        <name>substrate</name>
    </ligand>
</feature>
<feature type="binding site" evidence="1">
    <location>
        <position position="133"/>
    </location>
    <ligand>
        <name>substrate</name>
    </ligand>
</feature>
<feature type="binding site" evidence="1">
    <location>
        <begin position="163"/>
        <end position="164"/>
    </location>
    <ligand>
        <name>substrate</name>
    </ligand>
</feature>
<feature type="site" description="Important for catalytic activity" evidence="1">
    <location>
        <position position="174"/>
    </location>
</feature>
<dbReference type="EC" id="3.2.1.52" evidence="1"/>
<dbReference type="EMBL" id="AE008922">
    <property type="protein sequence ID" value="AAM40581.1"/>
    <property type="molecule type" value="Genomic_DNA"/>
</dbReference>
<dbReference type="RefSeq" id="NP_636657.1">
    <property type="nucleotide sequence ID" value="NC_003902.1"/>
</dbReference>
<dbReference type="RefSeq" id="WP_011036477.1">
    <property type="nucleotide sequence ID" value="NC_003902.1"/>
</dbReference>
<dbReference type="SMR" id="Q8PB42"/>
<dbReference type="STRING" id="190485.XCC1283"/>
<dbReference type="CAZy" id="GH3">
    <property type="family name" value="Glycoside Hydrolase Family 3"/>
</dbReference>
<dbReference type="EnsemblBacteria" id="AAM40581">
    <property type="protein sequence ID" value="AAM40581"/>
    <property type="gene ID" value="XCC1283"/>
</dbReference>
<dbReference type="KEGG" id="xcc:XCC1283"/>
<dbReference type="PATRIC" id="fig|190485.4.peg.1374"/>
<dbReference type="eggNOG" id="COG1472">
    <property type="taxonomic scope" value="Bacteria"/>
</dbReference>
<dbReference type="HOGENOM" id="CLU_008392_0_0_6"/>
<dbReference type="OrthoDB" id="9786661at2"/>
<dbReference type="UniPathway" id="UPA00544"/>
<dbReference type="Proteomes" id="UP000001010">
    <property type="component" value="Chromosome"/>
</dbReference>
<dbReference type="GO" id="GO:0005829">
    <property type="term" value="C:cytosol"/>
    <property type="evidence" value="ECO:0000318"/>
    <property type="project" value="GO_Central"/>
</dbReference>
<dbReference type="GO" id="GO:0016231">
    <property type="term" value="F:beta-N-acetylglucosaminidase activity"/>
    <property type="evidence" value="ECO:0000318"/>
    <property type="project" value="GO_Central"/>
</dbReference>
<dbReference type="GO" id="GO:0005975">
    <property type="term" value="P:carbohydrate metabolic process"/>
    <property type="evidence" value="ECO:0007669"/>
    <property type="project" value="InterPro"/>
</dbReference>
<dbReference type="GO" id="GO:0051301">
    <property type="term" value="P:cell division"/>
    <property type="evidence" value="ECO:0007669"/>
    <property type="project" value="UniProtKB-KW"/>
</dbReference>
<dbReference type="GO" id="GO:0071555">
    <property type="term" value="P:cell wall organization"/>
    <property type="evidence" value="ECO:0007669"/>
    <property type="project" value="UniProtKB-KW"/>
</dbReference>
<dbReference type="GO" id="GO:0009252">
    <property type="term" value="P:peptidoglycan biosynthetic process"/>
    <property type="evidence" value="ECO:0007669"/>
    <property type="project" value="UniProtKB-KW"/>
</dbReference>
<dbReference type="GO" id="GO:0009254">
    <property type="term" value="P:peptidoglycan turnover"/>
    <property type="evidence" value="ECO:0000318"/>
    <property type="project" value="GO_Central"/>
</dbReference>
<dbReference type="GO" id="GO:0008360">
    <property type="term" value="P:regulation of cell shape"/>
    <property type="evidence" value="ECO:0007669"/>
    <property type="project" value="UniProtKB-KW"/>
</dbReference>
<dbReference type="Gene3D" id="3.20.20.300">
    <property type="entry name" value="Glycoside hydrolase, family 3, N-terminal domain"/>
    <property type="match status" value="1"/>
</dbReference>
<dbReference type="HAMAP" id="MF_00364">
    <property type="entry name" value="NagZ"/>
    <property type="match status" value="1"/>
</dbReference>
<dbReference type="InterPro" id="IPR022956">
    <property type="entry name" value="Beta_hexosaminidase_bac"/>
</dbReference>
<dbReference type="InterPro" id="IPR019800">
    <property type="entry name" value="Glyco_hydro_3_AS"/>
</dbReference>
<dbReference type="InterPro" id="IPR001764">
    <property type="entry name" value="Glyco_hydro_3_N"/>
</dbReference>
<dbReference type="InterPro" id="IPR036962">
    <property type="entry name" value="Glyco_hydro_3_N_sf"/>
</dbReference>
<dbReference type="InterPro" id="IPR017853">
    <property type="entry name" value="Glycoside_hydrolase_SF"/>
</dbReference>
<dbReference type="InterPro" id="IPR050226">
    <property type="entry name" value="NagZ_Beta-hexosaminidase"/>
</dbReference>
<dbReference type="NCBIfam" id="NF003740">
    <property type="entry name" value="PRK05337.1"/>
    <property type="match status" value="1"/>
</dbReference>
<dbReference type="PANTHER" id="PTHR30480:SF13">
    <property type="entry name" value="BETA-HEXOSAMINIDASE"/>
    <property type="match status" value="1"/>
</dbReference>
<dbReference type="PANTHER" id="PTHR30480">
    <property type="entry name" value="BETA-HEXOSAMINIDASE-RELATED"/>
    <property type="match status" value="1"/>
</dbReference>
<dbReference type="Pfam" id="PF00933">
    <property type="entry name" value="Glyco_hydro_3"/>
    <property type="match status" value="1"/>
</dbReference>
<dbReference type="SUPFAM" id="SSF51445">
    <property type="entry name" value="(Trans)glycosidases"/>
    <property type="match status" value="1"/>
</dbReference>
<dbReference type="PROSITE" id="PS00775">
    <property type="entry name" value="GLYCOSYL_HYDROL_F3"/>
    <property type="match status" value="1"/>
</dbReference>
<sequence>MLLIGVAGTELSAQERDWLQHDAVAGVVLFKRNFASRTQVAELSAAIRAAAPRPQLICVDQEGGRVQRFREGYSALAPLQSFGALYATDPEGALAQARAHAQLMASEVRASGVDLSFAPVVDLARGNRAIGDRAFSDDPQVVASFTRAYVQALHAAGMGATLKHFPGHGTVLEDTHVDHASDPRPLDVLLAEDLVPFVAGIDAGADAVMMAHVVYPQVAPEPAGYASRWIEQILRGQLGFRGVVFSDDIGMAASFSAGGVAGRVHAHLDAGCDVVLVCHPELVAESLQAVAGRTLNTAALIGLIGRGALGWDGLLADAPTTSLSASFGTLA</sequence>
<name>NAGZ_XANCP</name>